<sequence length="398" mass="43272">MKVLVLNCGSSSVKYKLLEMPKGDVLAQGGVEKLGLPGSFLKLTMPNGEKVVLEKDMPEHTIAVEFILSVLKDDKYGCIKSYEEIDAVGHRLVHGGEKFSNSVEITPEVIAKVEECIPLAPLHNPANLKGVVAIEKLLPGIRQVGVFDTAFFQTMPEHVYRYALPYDMCNKHGVRRYGFHGTSHRYVSARACEILGLDYDKTRIITAHIGNGASIAAIKNGKALDVSLGMTPVEGLMMGTRSGDVDPGVLTFLMEAEGLQAAGISELINKKSGVLGVSGVSSDLREIEDAIKNGNERATLAMTMYDYRIKKYVGAYAAAMGGVDVLVFTGGVGENQYTTREKVCTDMEFMGIVFDSKVNEGMRGKEMVISKPESKVTVIVVPTDEEYMIASDTMTILK</sequence>
<proteinExistence type="evidence at protein level"/>
<keyword id="KW-0002">3D-structure</keyword>
<keyword id="KW-0067">ATP-binding</keyword>
<keyword id="KW-0963">Cytoplasm</keyword>
<keyword id="KW-0418">Kinase</keyword>
<keyword id="KW-0460">Magnesium</keyword>
<keyword id="KW-0479">Metal-binding</keyword>
<keyword id="KW-0547">Nucleotide-binding</keyword>
<keyword id="KW-0808">Transferase</keyword>
<comment type="function">
    <text evidence="1">Catalyzes the formation of acetyl phosphate from acetate and ATP. Can also catalyze the reverse reaction.</text>
</comment>
<comment type="catalytic activity">
    <reaction evidence="1">
        <text>acetate + ATP = acetyl phosphate + ADP</text>
        <dbReference type="Rhea" id="RHEA:11352"/>
        <dbReference type="ChEBI" id="CHEBI:22191"/>
        <dbReference type="ChEBI" id="CHEBI:30089"/>
        <dbReference type="ChEBI" id="CHEBI:30616"/>
        <dbReference type="ChEBI" id="CHEBI:456216"/>
        <dbReference type="EC" id="2.7.2.1"/>
    </reaction>
</comment>
<comment type="cofactor">
    <cofactor evidence="1">
        <name>Mg(2+)</name>
        <dbReference type="ChEBI" id="CHEBI:18420"/>
    </cofactor>
    <cofactor evidence="1">
        <name>Mn(2+)</name>
        <dbReference type="ChEBI" id="CHEBI:29035"/>
    </cofactor>
    <text evidence="1">Mg(2+). Can also accept Mn(2+).</text>
</comment>
<comment type="pathway">
    <text evidence="1">Metabolic intermediate biosynthesis; acetyl-CoA biosynthesis; acetyl-CoA from acetate: step 1/2.</text>
</comment>
<comment type="subunit">
    <text evidence="1">Homodimer.</text>
</comment>
<comment type="subcellular location">
    <subcellularLocation>
        <location evidence="1">Cytoplasm</location>
    </subcellularLocation>
</comment>
<comment type="similarity">
    <text evidence="1">Belongs to the acetokinase family.</text>
</comment>
<protein>
    <recommendedName>
        <fullName evidence="1">Acetate kinase</fullName>
        <ecNumber evidence="1">2.7.2.1</ecNumber>
    </recommendedName>
    <alternativeName>
        <fullName evidence="1">Acetokinase</fullName>
    </alternativeName>
</protein>
<gene>
    <name evidence="1" type="primary">ackA</name>
    <name type="ordered locus">PGN_1178</name>
</gene>
<reference key="1">
    <citation type="journal article" date="2008" name="DNA Res.">
        <title>Determination of the genome sequence of Porphyromonas gingivalis strain ATCC 33277 and genomic comparison with strain W83 revealed extensive genome rearrangements in P. gingivalis.</title>
        <authorList>
            <person name="Naito M."/>
            <person name="Hirakawa H."/>
            <person name="Yamashita A."/>
            <person name="Ohara N."/>
            <person name="Shoji M."/>
            <person name="Yukitake H."/>
            <person name="Nakayama K."/>
            <person name="Toh H."/>
            <person name="Yoshimura F."/>
            <person name="Kuhara S."/>
            <person name="Hattori M."/>
            <person name="Hayashi T."/>
            <person name="Nakayama K."/>
        </authorList>
    </citation>
    <scope>NUCLEOTIDE SEQUENCE [LARGE SCALE GENOMIC DNA]</scope>
    <source>
        <strain>ATCC 33277 / DSM 20709 / CIP 103683 / JCM 12257 / NCTC 11834 / 2561</strain>
    </source>
</reference>
<name>ACKA_PORG3</name>
<accession>B2RK02</accession>
<evidence type="ECO:0000255" key="1">
    <source>
        <dbReference type="HAMAP-Rule" id="MF_00020"/>
    </source>
</evidence>
<evidence type="ECO:0007829" key="2">
    <source>
        <dbReference type="PDB" id="6IOY"/>
    </source>
</evidence>
<organism>
    <name type="scientific">Porphyromonas gingivalis (strain ATCC 33277 / DSM 20709 / CIP 103683 / JCM 12257 / NCTC 11834 / 2561)</name>
    <dbReference type="NCBI Taxonomy" id="431947"/>
    <lineage>
        <taxon>Bacteria</taxon>
        <taxon>Pseudomonadati</taxon>
        <taxon>Bacteroidota</taxon>
        <taxon>Bacteroidia</taxon>
        <taxon>Bacteroidales</taxon>
        <taxon>Porphyromonadaceae</taxon>
        <taxon>Porphyromonas</taxon>
    </lineage>
</organism>
<dbReference type="EC" id="2.7.2.1" evidence="1"/>
<dbReference type="EMBL" id="AP009380">
    <property type="protein sequence ID" value="BAG33697.1"/>
    <property type="molecule type" value="Genomic_DNA"/>
</dbReference>
<dbReference type="RefSeq" id="WP_012458083.1">
    <property type="nucleotide sequence ID" value="NC_010729.1"/>
</dbReference>
<dbReference type="PDB" id="6IOY">
    <property type="method" value="X-ray"/>
    <property type="resolution" value="1.94 A"/>
    <property type="chains" value="A/B/C/D=2-398"/>
</dbReference>
<dbReference type="PDBsum" id="6IOY"/>
<dbReference type="SMR" id="B2RK02"/>
<dbReference type="GeneID" id="29256384"/>
<dbReference type="KEGG" id="pgn:PGN_1178"/>
<dbReference type="eggNOG" id="COG0282">
    <property type="taxonomic scope" value="Bacteria"/>
</dbReference>
<dbReference type="HOGENOM" id="CLU_020352_0_1_10"/>
<dbReference type="OrthoDB" id="9802453at2"/>
<dbReference type="BioCyc" id="PGIN431947:G1G2V-1347-MONOMER"/>
<dbReference type="BRENDA" id="2.7.2.1">
    <property type="organism ID" value="756"/>
</dbReference>
<dbReference type="UniPathway" id="UPA00340">
    <property type="reaction ID" value="UER00458"/>
</dbReference>
<dbReference type="Proteomes" id="UP000008842">
    <property type="component" value="Chromosome"/>
</dbReference>
<dbReference type="GO" id="GO:0005737">
    <property type="term" value="C:cytoplasm"/>
    <property type="evidence" value="ECO:0007669"/>
    <property type="project" value="UniProtKB-SubCell"/>
</dbReference>
<dbReference type="GO" id="GO:0008776">
    <property type="term" value="F:acetate kinase activity"/>
    <property type="evidence" value="ECO:0007669"/>
    <property type="project" value="UniProtKB-UniRule"/>
</dbReference>
<dbReference type="GO" id="GO:0005524">
    <property type="term" value="F:ATP binding"/>
    <property type="evidence" value="ECO:0007669"/>
    <property type="project" value="UniProtKB-KW"/>
</dbReference>
<dbReference type="GO" id="GO:0000287">
    <property type="term" value="F:magnesium ion binding"/>
    <property type="evidence" value="ECO:0007669"/>
    <property type="project" value="UniProtKB-UniRule"/>
</dbReference>
<dbReference type="GO" id="GO:0006083">
    <property type="term" value="P:acetate metabolic process"/>
    <property type="evidence" value="ECO:0007669"/>
    <property type="project" value="TreeGrafter"/>
</dbReference>
<dbReference type="GO" id="GO:0006085">
    <property type="term" value="P:acetyl-CoA biosynthetic process"/>
    <property type="evidence" value="ECO:0007669"/>
    <property type="project" value="UniProtKB-UniRule"/>
</dbReference>
<dbReference type="CDD" id="cd24010">
    <property type="entry name" value="ASKHA_NBD_AcK_PK"/>
    <property type="match status" value="1"/>
</dbReference>
<dbReference type="Gene3D" id="3.30.420.40">
    <property type="match status" value="2"/>
</dbReference>
<dbReference type="HAMAP" id="MF_00020">
    <property type="entry name" value="Acetate_kinase"/>
    <property type="match status" value="1"/>
</dbReference>
<dbReference type="InterPro" id="IPR004372">
    <property type="entry name" value="Ac/propionate_kinase"/>
</dbReference>
<dbReference type="InterPro" id="IPR000890">
    <property type="entry name" value="Aliphatic_acid_kin_short-chain"/>
</dbReference>
<dbReference type="InterPro" id="IPR023865">
    <property type="entry name" value="Aliphatic_acid_kinase_CS"/>
</dbReference>
<dbReference type="InterPro" id="IPR043129">
    <property type="entry name" value="ATPase_NBD"/>
</dbReference>
<dbReference type="NCBIfam" id="TIGR00016">
    <property type="entry name" value="ackA"/>
    <property type="match status" value="1"/>
</dbReference>
<dbReference type="PANTHER" id="PTHR21060">
    <property type="entry name" value="ACETATE KINASE"/>
    <property type="match status" value="1"/>
</dbReference>
<dbReference type="PANTHER" id="PTHR21060:SF15">
    <property type="entry name" value="ACETATE KINASE-RELATED"/>
    <property type="match status" value="1"/>
</dbReference>
<dbReference type="Pfam" id="PF00871">
    <property type="entry name" value="Acetate_kinase"/>
    <property type="match status" value="1"/>
</dbReference>
<dbReference type="PIRSF" id="PIRSF000722">
    <property type="entry name" value="Acetate_prop_kin"/>
    <property type="match status" value="1"/>
</dbReference>
<dbReference type="PRINTS" id="PR00471">
    <property type="entry name" value="ACETATEKNASE"/>
</dbReference>
<dbReference type="SUPFAM" id="SSF53067">
    <property type="entry name" value="Actin-like ATPase domain"/>
    <property type="match status" value="2"/>
</dbReference>
<dbReference type="PROSITE" id="PS01075">
    <property type="entry name" value="ACETATE_KINASE_1"/>
    <property type="match status" value="1"/>
</dbReference>
<dbReference type="PROSITE" id="PS01076">
    <property type="entry name" value="ACETATE_KINASE_2"/>
    <property type="match status" value="1"/>
</dbReference>
<feature type="chain" id="PRO_1000089989" description="Acetate kinase">
    <location>
        <begin position="1"/>
        <end position="398"/>
    </location>
</feature>
<feature type="active site" description="Proton donor/acceptor" evidence="1">
    <location>
        <position position="148"/>
    </location>
</feature>
<feature type="binding site" evidence="1">
    <location>
        <position position="7"/>
    </location>
    <ligand>
        <name>Mg(2+)</name>
        <dbReference type="ChEBI" id="CHEBI:18420"/>
    </ligand>
</feature>
<feature type="binding site" evidence="1">
    <location>
        <position position="14"/>
    </location>
    <ligand>
        <name>ATP</name>
        <dbReference type="ChEBI" id="CHEBI:30616"/>
    </ligand>
</feature>
<feature type="binding site" evidence="1">
    <location>
        <position position="91"/>
    </location>
    <ligand>
        <name>substrate</name>
    </ligand>
</feature>
<feature type="binding site" evidence="1">
    <location>
        <begin position="208"/>
        <end position="212"/>
    </location>
    <ligand>
        <name>ATP</name>
        <dbReference type="ChEBI" id="CHEBI:30616"/>
    </ligand>
</feature>
<feature type="binding site" evidence="1">
    <location>
        <begin position="283"/>
        <end position="285"/>
    </location>
    <ligand>
        <name>ATP</name>
        <dbReference type="ChEBI" id="CHEBI:30616"/>
    </ligand>
</feature>
<feature type="binding site" evidence="1">
    <location>
        <begin position="331"/>
        <end position="335"/>
    </location>
    <ligand>
        <name>ATP</name>
        <dbReference type="ChEBI" id="CHEBI:30616"/>
    </ligand>
</feature>
<feature type="binding site" evidence="1">
    <location>
        <position position="385"/>
    </location>
    <ligand>
        <name>Mg(2+)</name>
        <dbReference type="ChEBI" id="CHEBI:18420"/>
    </ligand>
</feature>
<feature type="site" description="Transition state stabilizer" evidence="1">
    <location>
        <position position="180"/>
    </location>
</feature>
<feature type="site" description="Transition state stabilizer" evidence="1">
    <location>
        <position position="241"/>
    </location>
</feature>
<feature type="strand" evidence="2">
    <location>
        <begin position="2"/>
        <end position="9"/>
    </location>
</feature>
<feature type="strand" evidence="2">
    <location>
        <begin position="12"/>
        <end position="20"/>
    </location>
</feature>
<feature type="turn" evidence="2">
    <location>
        <begin position="21"/>
        <end position="23"/>
    </location>
</feature>
<feature type="strand" evidence="2">
    <location>
        <begin position="24"/>
        <end position="33"/>
    </location>
</feature>
<feature type="strand" evidence="2">
    <location>
        <begin position="40"/>
        <end position="44"/>
    </location>
</feature>
<feature type="strand" evidence="2">
    <location>
        <begin position="50"/>
        <end position="54"/>
    </location>
</feature>
<feature type="helix" evidence="2">
    <location>
        <begin position="60"/>
        <end position="72"/>
    </location>
</feature>
<feature type="turn" evidence="2">
    <location>
        <begin position="74"/>
        <end position="76"/>
    </location>
</feature>
<feature type="helix" evidence="2">
    <location>
        <begin position="82"/>
        <end position="84"/>
    </location>
</feature>
<feature type="strand" evidence="2">
    <location>
        <begin position="87"/>
        <end position="93"/>
    </location>
</feature>
<feature type="turn" evidence="2">
    <location>
        <begin position="96"/>
        <end position="98"/>
    </location>
</feature>
<feature type="helix" evidence="2">
    <location>
        <begin position="107"/>
        <end position="115"/>
    </location>
</feature>
<feature type="helix" evidence="2">
    <location>
        <begin position="116"/>
        <end position="119"/>
    </location>
</feature>
<feature type="turn" evidence="2">
    <location>
        <begin position="121"/>
        <end position="123"/>
    </location>
</feature>
<feature type="helix" evidence="2">
    <location>
        <begin position="124"/>
        <end position="137"/>
    </location>
</feature>
<feature type="strand" evidence="2">
    <location>
        <begin position="143"/>
        <end position="149"/>
    </location>
</feature>
<feature type="helix" evidence="2">
    <location>
        <begin position="150"/>
        <end position="154"/>
    </location>
</feature>
<feature type="helix" evidence="2">
    <location>
        <begin position="157"/>
        <end position="160"/>
    </location>
</feature>
<feature type="helix" evidence="2">
    <location>
        <begin position="166"/>
        <end position="172"/>
    </location>
</feature>
<feature type="helix" evidence="2">
    <location>
        <begin position="181"/>
        <end position="195"/>
    </location>
</feature>
<feature type="helix" evidence="2">
    <location>
        <begin position="199"/>
        <end position="201"/>
    </location>
</feature>
<feature type="strand" evidence="2">
    <location>
        <begin position="203"/>
        <end position="219"/>
    </location>
</feature>
<feature type="strand" evidence="2">
    <location>
        <begin position="222"/>
        <end position="227"/>
    </location>
</feature>
<feature type="strand" evidence="2">
    <location>
        <begin position="234"/>
        <end position="236"/>
    </location>
</feature>
<feature type="helix" evidence="2">
    <location>
        <begin position="247"/>
        <end position="256"/>
    </location>
</feature>
<feature type="helix" evidence="2">
    <location>
        <begin position="261"/>
        <end position="270"/>
    </location>
</feature>
<feature type="helix" evidence="2">
    <location>
        <begin position="273"/>
        <end position="278"/>
    </location>
</feature>
<feature type="helix" evidence="2">
    <location>
        <begin position="284"/>
        <end position="292"/>
    </location>
</feature>
<feature type="helix" evidence="2">
    <location>
        <begin position="296"/>
        <end position="320"/>
    </location>
</feature>
<feature type="strand" evidence="2">
    <location>
        <begin position="324"/>
        <end position="329"/>
    </location>
</feature>
<feature type="helix" evidence="2">
    <location>
        <begin position="330"/>
        <end position="335"/>
    </location>
</feature>
<feature type="helix" evidence="2">
    <location>
        <begin position="337"/>
        <end position="344"/>
    </location>
</feature>
<feature type="helix" evidence="2">
    <location>
        <begin position="348"/>
        <end position="350"/>
    </location>
</feature>
<feature type="helix" evidence="2">
    <location>
        <begin position="356"/>
        <end position="359"/>
    </location>
</feature>
<feature type="strand" evidence="2">
    <location>
        <begin position="375"/>
        <end position="380"/>
    </location>
</feature>
<feature type="helix" evidence="2">
    <location>
        <begin position="385"/>
        <end position="397"/>
    </location>
</feature>